<sequence length="261" mass="29795">MSKLIPVIKVNNLSFYYDTQKILEGVSMEIYQSKVTAIIGPSGCGKSTFLKCLNRMNELESEVRVEGRVEFFNQNIYERRVNLNRLRRQVSMVHPKPNLFPMSVYDNVAYGVKIVGWRPKLEIDDIVESALKDADLWDEIKHKIHKSALDLSGGQQQRLCIARALAVKPKVLLMDEPCFGLDPIASMKVESLIQSLRLRSELTMVIVSHNLSQVSRVSDFTAFFKGNENRIGQLVEFGLTKKMFNSPHDSRTREYVLSRLG</sequence>
<dbReference type="EC" id="7.3.2.1" evidence="1"/>
<dbReference type="EMBL" id="BA000019">
    <property type="protein sequence ID" value="BAB72864.1"/>
    <property type="molecule type" value="Genomic_DNA"/>
</dbReference>
<dbReference type="PIR" id="AH1919">
    <property type="entry name" value="AH1919"/>
</dbReference>
<dbReference type="RefSeq" id="WP_010995081.1">
    <property type="nucleotide sequence ID" value="NZ_RSCN01000006.1"/>
</dbReference>
<dbReference type="SMR" id="Q8YYE3"/>
<dbReference type="STRING" id="103690.gene:10492920"/>
<dbReference type="KEGG" id="ana:all0907"/>
<dbReference type="eggNOG" id="COG1117">
    <property type="taxonomic scope" value="Bacteria"/>
</dbReference>
<dbReference type="OrthoDB" id="9802185at2"/>
<dbReference type="Proteomes" id="UP000002483">
    <property type="component" value="Chromosome"/>
</dbReference>
<dbReference type="GO" id="GO:0005886">
    <property type="term" value="C:plasma membrane"/>
    <property type="evidence" value="ECO:0007669"/>
    <property type="project" value="UniProtKB-SubCell"/>
</dbReference>
<dbReference type="GO" id="GO:0005524">
    <property type="term" value="F:ATP binding"/>
    <property type="evidence" value="ECO:0007669"/>
    <property type="project" value="UniProtKB-KW"/>
</dbReference>
<dbReference type="GO" id="GO:0016887">
    <property type="term" value="F:ATP hydrolysis activity"/>
    <property type="evidence" value="ECO:0007669"/>
    <property type="project" value="InterPro"/>
</dbReference>
<dbReference type="GO" id="GO:0015415">
    <property type="term" value="F:ATPase-coupled phosphate ion transmembrane transporter activity"/>
    <property type="evidence" value="ECO:0007669"/>
    <property type="project" value="UniProtKB-EC"/>
</dbReference>
<dbReference type="GO" id="GO:0035435">
    <property type="term" value="P:phosphate ion transmembrane transport"/>
    <property type="evidence" value="ECO:0007669"/>
    <property type="project" value="InterPro"/>
</dbReference>
<dbReference type="CDD" id="cd03260">
    <property type="entry name" value="ABC_PstB_phosphate_transporter"/>
    <property type="match status" value="1"/>
</dbReference>
<dbReference type="Gene3D" id="3.40.50.300">
    <property type="entry name" value="P-loop containing nucleotide triphosphate hydrolases"/>
    <property type="match status" value="1"/>
</dbReference>
<dbReference type="InterPro" id="IPR003593">
    <property type="entry name" value="AAA+_ATPase"/>
</dbReference>
<dbReference type="InterPro" id="IPR003439">
    <property type="entry name" value="ABC_transporter-like_ATP-bd"/>
</dbReference>
<dbReference type="InterPro" id="IPR017871">
    <property type="entry name" value="ABC_transporter-like_CS"/>
</dbReference>
<dbReference type="InterPro" id="IPR027417">
    <property type="entry name" value="P-loop_NTPase"/>
</dbReference>
<dbReference type="InterPro" id="IPR005670">
    <property type="entry name" value="PstB-like"/>
</dbReference>
<dbReference type="NCBIfam" id="NF010851">
    <property type="entry name" value="PRK14258.1"/>
    <property type="match status" value="1"/>
</dbReference>
<dbReference type="PANTHER" id="PTHR43423">
    <property type="entry name" value="ABC TRANSPORTER I FAMILY MEMBER 17"/>
    <property type="match status" value="1"/>
</dbReference>
<dbReference type="PANTHER" id="PTHR43423:SF9">
    <property type="entry name" value="PHOSPHATE IMPORT ATP-BINDING PROTEIN PSTB 3"/>
    <property type="match status" value="1"/>
</dbReference>
<dbReference type="Pfam" id="PF00005">
    <property type="entry name" value="ABC_tran"/>
    <property type="match status" value="1"/>
</dbReference>
<dbReference type="SMART" id="SM00382">
    <property type="entry name" value="AAA"/>
    <property type="match status" value="1"/>
</dbReference>
<dbReference type="SUPFAM" id="SSF52540">
    <property type="entry name" value="P-loop containing nucleoside triphosphate hydrolases"/>
    <property type="match status" value="1"/>
</dbReference>
<dbReference type="PROSITE" id="PS00211">
    <property type="entry name" value="ABC_TRANSPORTER_1"/>
    <property type="match status" value="1"/>
</dbReference>
<dbReference type="PROSITE" id="PS50893">
    <property type="entry name" value="ABC_TRANSPORTER_2"/>
    <property type="match status" value="1"/>
</dbReference>
<dbReference type="PROSITE" id="PS51238">
    <property type="entry name" value="PSTB"/>
    <property type="match status" value="1"/>
</dbReference>
<reference key="1">
    <citation type="journal article" date="2001" name="DNA Res.">
        <title>Complete genomic sequence of the filamentous nitrogen-fixing cyanobacterium Anabaena sp. strain PCC 7120.</title>
        <authorList>
            <person name="Kaneko T."/>
            <person name="Nakamura Y."/>
            <person name="Wolk C.P."/>
            <person name="Kuritz T."/>
            <person name="Sasamoto S."/>
            <person name="Watanabe A."/>
            <person name="Iriguchi M."/>
            <person name="Ishikawa A."/>
            <person name="Kawashima K."/>
            <person name="Kimura T."/>
            <person name="Kishida Y."/>
            <person name="Kohara M."/>
            <person name="Matsumoto M."/>
            <person name="Matsuno A."/>
            <person name="Muraki A."/>
            <person name="Nakazaki N."/>
            <person name="Shimpo S."/>
            <person name="Sugimoto M."/>
            <person name="Takazawa M."/>
            <person name="Yamada M."/>
            <person name="Yasuda M."/>
            <person name="Tabata S."/>
        </authorList>
    </citation>
    <scope>NUCLEOTIDE SEQUENCE [LARGE SCALE GENOMIC DNA]</scope>
    <source>
        <strain>PCC 7120 / SAG 25.82 / UTEX 2576</strain>
    </source>
</reference>
<feature type="chain" id="PRO_0000092767" description="Phosphate import ATP-binding protein PstB 1">
    <location>
        <begin position="1"/>
        <end position="261"/>
    </location>
</feature>
<feature type="domain" description="ABC transporter" evidence="1">
    <location>
        <begin position="8"/>
        <end position="256"/>
    </location>
</feature>
<feature type="binding site" evidence="1">
    <location>
        <begin position="40"/>
        <end position="47"/>
    </location>
    <ligand>
        <name>ATP</name>
        <dbReference type="ChEBI" id="CHEBI:30616"/>
    </ligand>
</feature>
<accession>Q8YYE3</accession>
<proteinExistence type="inferred from homology"/>
<organism>
    <name type="scientific">Nostoc sp. (strain PCC 7120 / SAG 25.82 / UTEX 2576)</name>
    <dbReference type="NCBI Taxonomy" id="103690"/>
    <lineage>
        <taxon>Bacteria</taxon>
        <taxon>Bacillati</taxon>
        <taxon>Cyanobacteriota</taxon>
        <taxon>Cyanophyceae</taxon>
        <taxon>Nostocales</taxon>
        <taxon>Nostocaceae</taxon>
        <taxon>Nostoc</taxon>
    </lineage>
</organism>
<protein>
    <recommendedName>
        <fullName evidence="1">Phosphate import ATP-binding protein PstB 1</fullName>
        <ecNumber evidence="1">7.3.2.1</ecNumber>
    </recommendedName>
    <alternativeName>
        <fullName evidence="1">ABC phosphate transporter 1</fullName>
    </alternativeName>
    <alternativeName>
        <fullName evidence="1">Phosphate-transporting ATPase 1</fullName>
    </alternativeName>
</protein>
<evidence type="ECO:0000255" key="1">
    <source>
        <dbReference type="HAMAP-Rule" id="MF_01702"/>
    </source>
</evidence>
<keyword id="KW-0067">ATP-binding</keyword>
<keyword id="KW-0997">Cell inner membrane</keyword>
<keyword id="KW-1003">Cell membrane</keyword>
<keyword id="KW-0472">Membrane</keyword>
<keyword id="KW-0547">Nucleotide-binding</keyword>
<keyword id="KW-0592">Phosphate transport</keyword>
<keyword id="KW-1185">Reference proteome</keyword>
<keyword id="KW-1278">Translocase</keyword>
<keyword id="KW-0813">Transport</keyword>
<gene>
    <name evidence="1" type="primary">pstB1</name>
    <name type="ordered locus">all0907</name>
</gene>
<comment type="function">
    <text evidence="1">Part of the ABC transporter complex PstSACB involved in phosphate import. Responsible for energy coupling to the transport system.</text>
</comment>
<comment type="catalytic activity">
    <reaction evidence="1">
        <text>phosphate(out) + ATP + H2O = ADP + 2 phosphate(in) + H(+)</text>
        <dbReference type="Rhea" id="RHEA:24440"/>
        <dbReference type="ChEBI" id="CHEBI:15377"/>
        <dbReference type="ChEBI" id="CHEBI:15378"/>
        <dbReference type="ChEBI" id="CHEBI:30616"/>
        <dbReference type="ChEBI" id="CHEBI:43474"/>
        <dbReference type="ChEBI" id="CHEBI:456216"/>
        <dbReference type="EC" id="7.3.2.1"/>
    </reaction>
</comment>
<comment type="subunit">
    <text evidence="1">The complex is composed of two ATP-binding proteins (PstB), two transmembrane proteins (PstC and PstA) and a solute-binding protein (PstS).</text>
</comment>
<comment type="subcellular location">
    <subcellularLocation>
        <location evidence="1">Cell inner membrane</location>
        <topology evidence="1">Peripheral membrane protein</topology>
    </subcellularLocation>
</comment>
<comment type="similarity">
    <text evidence="1">Belongs to the ABC transporter superfamily. Phosphate importer (TC 3.A.1.7) family.</text>
</comment>
<name>PSTB1_NOSS1</name>